<reference key="1">
    <citation type="journal article" date="2009" name="J. Bacteriol.">
        <title>Role of conjugative elements in the evolution of the multidrug-resistant pandemic clone Streptococcus pneumoniae Spain23F ST81.</title>
        <authorList>
            <person name="Croucher N.J."/>
            <person name="Walker D."/>
            <person name="Romero P."/>
            <person name="Lennard N."/>
            <person name="Paterson G.K."/>
            <person name="Bason N.C."/>
            <person name="Mitchell A.M."/>
            <person name="Quail M.A."/>
            <person name="Andrew P.W."/>
            <person name="Parkhill J."/>
            <person name="Bentley S.D."/>
            <person name="Mitchell T.J."/>
        </authorList>
    </citation>
    <scope>NUCLEOTIDE SEQUENCE [LARGE SCALE GENOMIC DNA]</scope>
    <source>
        <strain>ATCC 700669 / Spain 23F-1</strain>
    </source>
</reference>
<organism>
    <name type="scientific">Streptococcus pneumoniae (strain ATCC 700669 / Spain 23F-1)</name>
    <dbReference type="NCBI Taxonomy" id="561276"/>
    <lineage>
        <taxon>Bacteria</taxon>
        <taxon>Bacillati</taxon>
        <taxon>Bacillota</taxon>
        <taxon>Bacilli</taxon>
        <taxon>Lactobacillales</taxon>
        <taxon>Streptococcaceae</taxon>
        <taxon>Streptococcus</taxon>
    </lineage>
</organism>
<proteinExistence type="inferred from homology"/>
<comment type="function">
    <text evidence="1">Divisome component that associates with the complex late in its assembly, after the Z-ring is formed, and is dependent on DivIC and PBP2B for its recruitment to the divisome. Together with EzrA, is a key component of the system that regulates PBP1 localization during cell cycle progression. Its main role could be the removal of PBP1 from the cell pole after pole maturation is completed. Also contributes to the recruitment of PBP1 to the division complex. Not essential for septum formation.</text>
</comment>
<comment type="subunit">
    <text evidence="1">Forms polymers through the coiled coil domains. Interacts with PBP1, MreC and EzrA.</text>
</comment>
<comment type="subcellular location">
    <subcellularLocation>
        <location evidence="1">Cytoplasm</location>
    </subcellularLocation>
    <text evidence="1">Shuttles between the lateral wall and the division site in a cell cycle-dependent manner.</text>
</comment>
<comment type="similarity">
    <text evidence="1">Belongs to the GpsB family.</text>
</comment>
<keyword id="KW-0131">Cell cycle</keyword>
<keyword id="KW-0132">Cell division</keyword>
<keyword id="KW-0133">Cell shape</keyword>
<keyword id="KW-0175">Coiled coil</keyword>
<keyword id="KW-0963">Cytoplasm</keyword>
<feature type="chain" id="PRO_1000189500" description="Cell cycle protein GpsB">
    <location>
        <begin position="1"/>
        <end position="113"/>
    </location>
</feature>
<feature type="region of interest" description="Disordered" evidence="2">
    <location>
        <begin position="61"/>
        <end position="82"/>
    </location>
</feature>
<feature type="coiled-coil region" evidence="1">
    <location>
        <begin position="37"/>
        <end position="63"/>
    </location>
</feature>
<evidence type="ECO:0000255" key="1">
    <source>
        <dbReference type="HAMAP-Rule" id="MF_02011"/>
    </source>
</evidence>
<evidence type="ECO:0000256" key="2">
    <source>
        <dbReference type="SAM" id="MobiDB-lite"/>
    </source>
</evidence>
<protein>
    <recommendedName>
        <fullName evidence="1">Cell cycle protein GpsB</fullName>
    </recommendedName>
    <alternativeName>
        <fullName evidence="1">Guiding PBP1-shuttling protein</fullName>
    </alternativeName>
</protein>
<dbReference type="EMBL" id="FM211187">
    <property type="protein sequence ID" value="CAR68199.1"/>
    <property type="molecule type" value="Genomic_DNA"/>
</dbReference>
<dbReference type="RefSeq" id="WP_000200645.1">
    <property type="nucleotide sequence ID" value="NC_011900.1"/>
</dbReference>
<dbReference type="SMR" id="B8ZL84"/>
<dbReference type="KEGG" id="sne:SPN23F03440"/>
<dbReference type="HOGENOM" id="CLU_140309_1_0_9"/>
<dbReference type="GO" id="GO:0005737">
    <property type="term" value="C:cytoplasm"/>
    <property type="evidence" value="ECO:0007669"/>
    <property type="project" value="UniProtKB-SubCell"/>
</dbReference>
<dbReference type="GO" id="GO:0051301">
    <property type="term" value="P:cell division"/>
    <property type="evidence" value="ECO:0007669"/>
    <property type="project" value="UniProtKB-UniRule"/>
</dbReference>
<dbReference type="GO" id="GO:0008360">
    <property type="term" value="P:regulation of cell shape"/>
    <property type="evidence" value="ECO:0007669"/>
    <property type="project" value="UniProtKB-UniRule"/>
</dbReference>
<dbReference type="Gene3D" id="6.10.250.660">
    <property type="match status" value="1"/>
</dbReference>
<dbReference type="HAMAP" id="MF_02011">
    <property type="entry name" value="GpsB"/>
    <property type="match status" value="1"/>
</dbReference>
<dbReference type="InterPro" id="IPR011229">
    <property type="entry name" value="Cell_cycle_GpsB"/>
</dbReference>
<dbReference type="InterPro" id="IPR019933">
    <property type="entry name" value="DivIVA_domain"/>
</dbReference>
<dbReference type="InterPro" id="IPR007793">
    <property type="entry name" value="DivIVA_fam"/>
</dbReference>
<dbReference type="NCBIfam" id="TIGR03544">
    <property type="entry name" value="DivI1A_domain"/>
    <property type="match status" value="1"/>
</dbReference>
<dbReference type="NCBIfam" id="NF010725">
    <property type="entry name" value="PRK14127.1"/>
    <property type="match status" value="1"/>
</dbReference>
<dbReference type="PANTHER" id="PTHR35794:SF1">
    <property type="entry name" value="CELL CYCLE PROTEIN GPSB"/>
    <property type="match status" value="1"/>
</dbReference>
<dbReference type="PANTHER" id="PTHR35794">
    <property type="entry name" value="CELL DIVISION PROTEIN DIVIVA"/>
    <property type="match status" value="1"/>
</dbReference>
<dbReference type="Pfam" id="PF05103">
    <property type="entry name" value="DivIVA"/>
    <property type="match status" value="1"/>
</dbReference>
<dbReference type="PIRSF" id="PIRSF029938">
    <property type="entry name" value="UCP029938"/>
    <property type="match status" value="1"/>
</dbReference>
<sequence length="113" mass="12900">MTSIIFSAKDIFEQEFGREVRGYSKVEVDEFLDDVIKDYETYATLVKSLRQEIADLKEELTRKPQVSSAPSPSHPDPIDVAASSSMTNFDILKRLNRLEKEVFGKQILDNTDL</sequence>
<name>GPSB_STRPJ</name>
<gene>
    <name evidence="1" type="primary">gpsB</name>
    <name type="ordered locus">SPN23F03440</name>
</gene>
<accession>B8ZL84</accession>